<dbReference type="EC" id="2.1.1.67" evidence="1"/>
<dbReference type="EMBL" id="CP000926">
    <property type="protein sequence ID" value="ABY97352.1"/>
    <property type="molecule type" value="Genomic_DNA"/>
</dbReference>
<dbReference type="RefSeq" id="WP_012271121.1">
    <property type="nucleotide sequence ID" value="NC_010322.1"/>
</dbReference>
<dbReference type="SMR" id="B0KUP7"/>
<dbReference type="KEGG" id="ppg:PputGB1_1445"/>
<dbReference type="eggNOG" id="COG0500">
    <property type="taxonomic scope" value="Bacteria"/>
</dbReference>
<dbReference type="HOGENOM" id="CLU_085515_1_0_6"/>
<dbReference type="Proteomes" id="UP000002157">
    <property type="component" value="Chromosome"/>
</dbReference>
<dbReference type="GO" id="GO:0005737">
    <property type="term" value="C:cytoplasm"/>
    <property type="evidence" value="ECO:0007669"/>
    <property type="project" value="UniProtKB-SubCell"/>
</dbReference>
<dbReference type="GO" id="GO:0008119">
    <property type="term" value="F:thiopurine S-methyltransferase activity"/>
    <property type="evidence" value="ECO:0007669"/>
    <property type="project" value="UniProtKB-UniRule"/>
</dbReference>
<dbReference type="GO" id="GO:0032259">
    <property type="term" value="P:methylation"/>
    <property type="evidence" value="ECO:0007669"/>
    <property type="project" value="UniProtKB-KW"/>
</dbReference>
<dbReference type="GO" id="GO:0010038">
    <property type="term" value="P:response to metal ion"/>
    <property type="evidence" value="ECO:0007669"/>
    <property type="project" value="InterPro"/>
</dbReference>
<dbReference type="FunFam" id="3.40.50.150:FF:000101">
    <property type="entry name" value="Thiopurine S-methyltransferase"/>
    <property type="match status" value="1"/>
</dbReference>
<dbReference type="Gene3D" id="3.40.50.150">
    <property type="entry name" value="Vaccinia Virus protein VP39"/>
    <property type="match status" value="1"/>
</dbReference>
<dbReference type="HAMAP" id="MF_00812">
    <property type="entry name" value="Thiopur_methtran"/>
    <property type="match status" value="1"/>
</dbReference>
<dbReference type="InterPro" id="IPR029063">
    <property type="entry name" value="SAM-dependent_MTases_sf"/>
</dbReference>
<dbReference type="InterPro" id="IPR022474">
    <property type="entry name" value="Thiopur_S-MeTfrase_Se/Te_detox"/>
</dbReference>
<dbReference type="InterPro" id="IPR025835">
    <property type="entry name" value="Thiopurine_S-MeTrfase"/>
</dbReference>
<dbReference type="InterPro" id="IPR008854">
    <property type="entry name" value="TPMT"/>
</dbReference>
<dbReference type="NCBIfam" id="NF009732">
    <property type="entry name" value="PRK13255.1"/>
    <property type="match status" value="1"/>
</dbReference>
<dbReference type="NCBIfam" id="TIGR03840">
    <property type="entry name" value="TMPT_Se_Te"/>
    <property type="match status" value="1"/>
</dbReference>
<dbReference type="PANTHER" id="PTHR10259">
    <property type="entry name" value="THIOPURINE S-METHYLTRANSFERASE"/>
    <property type="match status" value="1"/>
</dbReference>
<dbReference type="PANTHER" id="PTHR10259:SF11">
    <property type="entry name" value="THIOPURINE S-METHYLTRANSFERASE"/>
    <property type="match status" value="1"/>
</dbReference>
<dbReference type="Pfam" id="PF05724">
    <property type="entry name" value="TPMT"/>
    <property type="match status" value="1"/>
</dbReference>
<dbReference type="PIRSF" id="PIRSF023956">
    <property type="entry name" value="Thiopurine_S-methyltransferase"/>
    <property type="match status" value="1"/>
</dbReference>
<dbReference type="SUPFAM" id="SSF53335">
    <property type="entry name" value="S-adenosyl-L-methionine-dependent methyltransferases"/>
    <property type="match status" value="1"/>
</dbReference>
<dbReference type="PROSITE" id="PS51585">
    <property type="entry name" value="SAM_MT_TPMT"/>
    <property type="match status" value="1"/>
</dbReference>
<comment type="catalytic activity">
    <reaction evidence="1">
        <text>S-adenosyl-L-methionine + a thiopurine = S-adenosyl-L-homocysteine + a thiopurine S-methylether.</text>
        <dbReference type="EC" id="2.1.1.67"/>
    </reaction>
</comment>
<comment type="subcellular location">
    <subcellularLocation>
        <location evidence="1">Cytoplasm</location>
    </subcellularLocation>
</comment>
<comment type="similarity">
    <text evidence="1">Belongs to the class I-like SAM-binding methyltransferase superfamily. TPMT family.</text>
</comment>
<accession>B0KUP7</accession>
<evidence type="ECO:0000255" key="1">
    <source>
        <dbReference type="HAMAP-Rule" id="MF_00812"/>
    </source>
</evidence>
<name>TPMT_PSEPG</name>
<gene>
    <name evidence="1" type="primary">tpm</name>
    <name type="ordered locus">PputGB1_1445</name>
</gene>
<proteinExistence type="inferred from homology"/>
<reference key="1">
    <citation type="submission" date="2008-01" db="EMBL/GenBank/DDBJ databases">
        <title>Complete sequence of Pseudomonas putida GB-1.</title>
        <authorList>
            <consortium name="US DOE Joint Genome Institute"/>
            <person name="Copeland A."/>
            <person name="Lucas S."/>
            <person name="Lapidus A."/>
            <person name="Barry K."/>
            <person name="Glavina del Rio T."/>
            <person name="Dalin E."/>
            <person name="Tice H."/>
            <person name="Pitluck S."/>
            <person name="Bruce D."/>
            <person name="Goodwin L."/>
            <person name="Chertkov O."/>
            <person name="Brettin T."/>
            <person name="Detter J.C."/>
            <person name="Han C."/>
            <person name="Kuske C.R."/>
            <person name="Schmutz J."/>
            <person name="Larimer F."/>
            <person name="Land M."/>
            <person name="Hauser L."/>
            <person name="Kyrpides N."/>
            <person name="Kim E."/>
            <person name="McCarthy J.K."/>
            <person name="Richardson P."/>
        </authorList>
    </citation>
    <scope>NUCLEOTIDE SEQUENCE [LARGE SCALE GENOMIC DNA]</scope>
    <source>
        <strain>GB-1</strain>
    </source>
</reference>
<protein>
    <recommendedName>
        <fullName evidence="1">Thiopurine S-methyltransferase</fullName>
        <ecNumber evidence="1">2.1.1.67</ecNumber>
    </recommendedName>
    <alternativeName>
        <fullName evidence="1">Thiopurine methyltransferase</fullName>
    </alternativeName>
</protein>
<sequence>MEPAFWQKRWADNQIGFHQAQVNPYLQKYWPRLQLAPASRVLVPLCGKSLDLAWLAGQGYRVLGVELSRQAVEGFFREHGLDADVLQHGAFEVWRSGEIELWCGDFFTLQAEDIADCVGLYDRAALIALPPQMRAAYMRLLSAWLPAGCRGLLVTLDYDQSLLGGPPFSVGDKEVLQGFAGWQMDELEVVELIQESPKFLQAGACSLLERVYRVKR</sequence>
<organism>
    <name type="scientific">Pseudomonas putida (strain GB-1)</name>
    <dbReference type="NCBI Taxonomy" id="76869"/>
    <lineage>
        <taxon>Bacteria</taxon>
        <taxon>Pseudomonadati</taxon>
        <taxon>Pseudomonadota</taxon>
        <taxon>Gammaproteobacteria</taxon>
        <taxon>Pseudomonadales</taxon>
        <taxon>Pseudomonadaceae</taxon>
        <taxon>Pseudomonas</taxon>
    </lineage>
</organism>
<feature type="chain" id="PRO_1000083761" description="Thiopurine S-methyltransferase">
    <location>
        <begin position="1"/>
        <end position="216"/>
    </location>
</feature>
<feature type="binding site" evidence="1">
    <location>
        <position position="10"/>
    </location>
    <ligand>
        <name>S-adenosyl-L-methionine</name>
        <dbReference type="ChEBI" id="CHEBI:59789"/>
    </ligand>
</feature>
<feature type="binding site" evidence="1">
    <location>
        <position position="45"/>
    </location>
    <ligand>
        <name>S-adenosyl-L-methionine</name>
        <dbReference type="ChEBI" id="CHEBI:59789"/>
    </ligand>
</feature>
<feature type="binding site" evidence="1">
    <location>
        <position position="66"/>
    </location>
    <ligand>
        <name>S-adenosyl-L-methionine</name>
        <dbReference type="ChEBI" id="CHEBI:59789"/>
    </ligand>
</feature>
<feature type="binding site" evidence="1">
    <location>
        <position position="123"/>
    </location>
    <ligand>
        <name>S-adenosyl-L-methionine</name>
        <dbReference type="ChEBI" id="CHEBI:59789"/>
    </ligand>
</feature>
<keyword id="KW-0963">Cytoplasm</keyword>
<keyword id="KW-0489">Methyltransferase</keyword>
<keyword id="KW-0949">S-adenosyl-L-methionine</keyword>
<keyword id="KW-0808">Transferase</keyword>